<dbReference type="EC" id="2.5.1.19" evidence="1"/>
<dbReference type="EMBL" id="CP000671">
    <property type="protein sequence ID" value="ABQ98479.1"/>
    <property type="molecule type" value="Genomic_DNA"/>
</dbReference>
<dbReference type="SMR" id="A5UCH8"/>
<dbReference type="KEGG" id="hip:CGSHiEE_05550"/>
<dbReference type="HOGENOM" id="CLU_024321_0_0_6"/>
<dbReference type="UniPathway" id="UPA00053">
    <property type="reaction ID" value="UER00089"/>
</dbReference>
<dbReference type="GO" id="GO:0005737">
    <property type="term" value="C:cytoplasm"/>
    <property type="evidence" value="ECO:0007669"/>
    <property type="project" value="UniProtKB-SubCell"/>
</dbReference>
<dbReference type="GO" id="GO:0003866">
    <property type="term" value="F:3-phosphoshikimate 1-carboxyvinyltransferase activity"/>
    <property type="evidence" value="ECO:0007669"/>
    <property type="project" value="UniProtKB-UniRule"/>
</dbReference>
<dbReference type="GO" id="GO:0008652">
    <property type="term" value="P:amino acid biosynthetic process"/>
    <property type="evidence" value="ECO:0007669"/>
    <property type="project" value="UniProtKB-KW"/>
</dbReference>
<dbReference type="GO" id="GO:0009073">
    <property type="term" value="P:aromatic amino acid family biosynthetic process"/>
    <property type="evidence" value="ECO:0007669"/>
    <property type="project" value="UniProtKB-KW"/>
</dbReference>
<dbReference type="GO" id="GO:0009423">
    <property type="term" value="P:chorismate biosynthetic process"/>
    <property type="evidence" value="ECO:0007669"/>
    <property type="project" value="UniProtKB-UniRule"/>
</dbReference>
<dbReference type="CDD" id="cd01556">
    <property type="entry name" value="EPSP_synthase"/>
    <property type="match status" value="1"/>
</dbReference>
<dbReference type="FunFam" id="3.65.10.10:FF:000003">
    <property type="entry name" value="3-phosphoshikimate 1-carboxyvinyltransferase"/>
    <property type="match status" value="1"/>
</dbReference>
<dbReference type="FunFam" id="3.65.10.10:FF:000004">
    <property type="entry name" value="3-phosphoshikimate 1-carboxyvinyltransferase"/>
    <property type="match status" value="1"/>
</dbReference>
<dbReference type="Gene3D" id="3.65.10.10">
    <property type="entry name" value="Enolpyruvate transferase domain"/>
    <property type="match status" value="2"/>
</dbReference>
<dbReference type="HAMAP" id="MF_00210">
    <property type="entry name" value="EPSP_synth"/>
    <property type="match status" value="1"/>
</dbReference>
<dbReference type="InterPro" id="IPR001986">
    <property type="entry name" value="Enolpyruvate_Tfrase_dom"/>
</dbReference>
<dbReference type="InterPro" id="IPR036968">
    <property type="entry name" value="Enolpyruvate_Tfrase_sf"/>
</dbReference>
<dbReference type="InterPro" id="IPR006264">
    <property type="entry name" value="EPSP_synthase"/>
</dbReference>
<dbReference type="InterPro" id="IPR023193">
    <property type="entry name" value="EPSP_synthase_CS"/>
</dbReference>
<dbReference type="InterPro" id="IPR013792">
    <property type="entry name" value="RNA3'P_cycl/enolpyr_Trfase_a/b"/>
</dbReference>
<dbReference type="NCBIfam" id="TIGR01356">
    <property type="entry name" value="aroA"/>
    <property type="match status" value="1"/>
</dbReference>
<dbReference type="PANTHER" id="PTHR21090">
    <property type="entry name" value="AROM/DEHYDROQUINATE SYNTHASE"/>
    <property type="match status" value="1"/>
</dbReference>
<dbReference type="PANTHER" id="PTHR21090:SF5">
    <property type="entry name" value="PENTAFUNCTIONAL AROM POLYPEPTIDE"/>
    <property type="match status" value="1"/>
</dbReference>
<dbReference type="Pfam" id="PF00275">
    <property type="entry name" value="EPSP_synthase"/>
    <property type="match status" value="1"/>
</dbReference>
<dbReference type="PIRSF" id="PIRSF000505">
    <property type="entry name" value="EPSPS"/>
    <property type="match status" value="1"/>
</dbReference>
<dbReference type="SUPFAM" id="SSF55205">
    <property type="entry name" value="EPT/RTPC-like"/>
    <property type="match status" value="1"/>
</dbReference>
<dbReference type="PROSITE" id="PS00104">
    <property type="entry name" value="EPSP_SYNTHASE_1"/>
    <property type="match status" value="1"/>
</dbReference>
<dbReference type="PROSITE" id="PS00885">
    <property type="entry name" value="EPSP_SYNTHASE_2"/>
    <property type="match status" value="1"/>
</dbReference>
<proteinExistence type="inferred from homology"/>
<sequence length="432" mass="47436">MEKITLAPISAVEGTINLPGSKSLSNRALLLAALAKGTTKVTNLLDSDDIRHMLNALKALGVRYQLSDDKTICEVEGLGGTFNIQDNLSLFLGNAGTAMRPLTAALCLKGKTESEIILTGEPRMKERPILHLVDALRQAGADIRYLENEGYPPLAIRNKGIKGGKVKIDGSISSQFLTALLMSAPLAENDTEIEIIGELVSKPYIDITLAMMRDFGVKVENHHYQKFQVKGNQSYISPNKYLVEGDASSASYFLAAGAIKGKVKVTGIGKNSIQGDRLFADVLEKMGAKITWGEDFIQAEHAELNGIDMDMNHIPDAAMTIATTALFSNGETVIRNIYNWRVKETDRLTAMATELRKVGAEVEEGEDFIHIQPLPLNQFKHANIETYNDHRIAMCFSLIALSNTPVTILDPKCTAKTFPTFFSEFEKICLRD</sequence>
<name>AROA_HAEIE</name>
<organism>
    <name type="scientific">Haemophilus influenzae (strain PittEE)</name>
    <dbReference type="NCBI Taxonomy" id="374930"/>
    <lineage>
        <taxon>Bacteria</taxon>
        <taxon>Pseudomonadati</taxon>
        <taxon>Pseudomonadota</taxon>
        <taxon>Gammaproteobacteria</taxon>
        <taxon>Pasteurellales</taxon>
        <taxon>Pasteurellaceae</taxon>
        <taxon>Haemophilus</taxon>
    </lineage>
</organism>
<comment type="function">
    <text evidence="1">Catalyzes the transfer of the enolpyruvyl moiety of phosphoenolpyruvate (PEP) to the 5-hydroxyl of shikimate-3-phosphate (S3P) to produce enolpyruvyl shikimate-3-phosphate and inorganic phosphate.</text>
</comment>
<comment type="catalytic activity">
    <reaction evidence="1">
        <text>3-phosphoshikimate + phosphoenolpyruvate = 5-O-(1-carboxyvinyl)-3-phosphoshikimate + phosphate</text>
        <dbReference type="Rhea" id="RHEA:21256"/>
        <dbReference type="ChEBI" id="CHEBI:43474"/>
        <dbReference type="ChEBI" id="CHEBI:57701"/>
        <dbReference type="ChEBI" id="CHEBI:58702"/>
        <dbReference type="ChEBI" id="CHEBI:145989"/>
        <dbReference type="EC" id="2.5.1.19"/>
    </reaction>
    <physiologicalReaction direction="left-to-right" evidence="1">
        <dbReference type="Rhea" id="RHEA:21257"/>
    </physiologicalReaction>
</comment>
<comment type="pathway">
    <text evidence="1">Metabolic intermediate biosynthesis; chorismate biosynthesis; chorismate from D-erythrose 4-phosphate and phosphoenolpyruvate: step 6/7.</text>
</comment>
<comment type="subunit">
    <text evidence="1">Monomer.</text>
</comment>
<comment type="subcellular location">
    <subcellularLocation>
        <location evidence="1">Cytoplasm</location>
    </subcellularLocation>
</comment>
<comment type="similarity">
    <text evidence="1">Belongs to the EPSP synthase family.</text>
</comment>
<reference key="1">
    <citation type="journal article" date="2007" name="Genome Biol.">
        <title>Characterization and modeling of the Haemophilus influenzae core and supragenomes based on the complete genomic sequences of Rd and 12 clinical nontypeable strains.</title>
        <authorList>
            <person name="Hogg J.S."/>
            <person name="Hu F.Z."/>
            <person name="Janto B."/>
            <person name="Boissy R."/>
            <person name="Hayes J."/>
            <person name="Keefe R."/>
            <person name="Post J.C."/>
            <person name="Ehrlich G.D."/>
        </authorList>
    </citation>
    <scope>NUCLEOTIDE SEQUENCE [LARGE SCALE GENOMIC DNA]</scope>
    <source>
        <strain>PittEE</strain>
    </source>
</reference>
<accession>A5UCH8</accession>
<gene>
    <name evidence="1" type="primary">aroA</name>
    <name type="ordered locus">CGSHiEE_05550</name>
</gene>
<protein>
    <recommendedName>
        <fullName evidence="1">3-phosphoshikimate 1-carboxyvinyltransferase</fullName>
        <ecNumber evidence="1">2.5.1.19</ecNumber>
    </recommendedName>
    <alternativeName>
        <fullName evidence="1">5-enolpyruvylshikimate-3-phosphate synthase</fullName>
        <shortName evidence="1">EPSP synthase</shortName>
        <shortName evidence="1">EPSPS</shortName>
    </alternativeName>
</protein>
<evidence type="ECO:0000255" key="1">
    <source>
        <dbReference type="HAMAP-Rule" id="MF_00210"/>
    </source>
</evidence>
<keyword id="KW-0028">Amino-acid biosynthesis</keyword>
<keyword id="KW-0057">Aromatic amino acid biosynthesis</keyword>
<keyword id="KW-0963">Cytoplasm</keyword>
<keyword id="KW-0808">Transferase</keyword>
<feature type="chain" id="PRO_1000012438" description="3-phosphoshikimate 1-carboxyvinyltransferase">
    <location>
        <begin position="1"/>
        <end position="432"/>
    </location>
</feature>
<feature type="active site" description="Proton acceptor" evidence="1">
    <location>
        <position position="316"/>
    </location>
</feature>
<feature type="binding site" evidence="1">
    <location>
        <position position="22"/>
    </location>
    <ligand>
        <name>3-phosphoshikimate</name>
        <dbReference type="ChEBI" id="CHEBI:145989"/>
    </ligand>
</feature>
<feature type="binding site" evidence="1">
    <location>
        <position position="22"/>
    </location>
    <ligand>
        <name>phosphoenolpyruvate</name>
        <dbReference type="ChEBI" id="CHEBI:58702"/>
    </ligand>
</feature>
<feature type="binding site" evidence="1">
    <location>
        <position position="23"/>
    </location>
    <ligand>
        <name>3-phosphoshikimate</name>
        <dbReference type="ChEBI" id="CHEBI:145989"/>
    </ligand>
</feature>
<feature type="binding site" evidence="1">
    <location>
        <position position="27"/>
    </location>
    <ligand>
        <name>3-phosphoshikimate</name>
        <dbReference type="ChEBI" id="CHEBI:145989"/>
    </ligand>
</feature>
<feature type="binding site" evidence="1">
    <location>
        <position position="96"/>
    </location>
    <ligand>
        <name>phosphoenolpyruvate</name>
        <dbReference type="ChEBI" id="CHEBI:58702"/>
    </ligand>
</feature>
<feature type="binding site" evidence="1">
    <location>
        <position position="127"/>
    </location>
    <ligand>
        <name>phosphoenolpyruvate</name>
        <dbReference type="ChEBI" id="CHEBI:58702"/>
    </ligand>
</feature>
<feature type="binding site" evidence="1">
    <location>
        <position position="173"/>
    </location>
    <ligand>
        <name>3-phosphoshikimate</name>
        <dbReference type="ChEBI" id="CHEBI:145989"/>
    </ligand>
</feature>
<feature type="binding site" evidence="1">
    <location>
        <position position="174"/>
    </location>
    <ligand>
        <name>3-phosphoshikimate</name>
        <dbReference type="ChEBI" id="CHEBI:145989"/>
    </ligand>
</feature>
<feature type="binding site" evidence="1">
    <location>
        <position position="175"/>
    </location>
    <ligand>
        <name>3-phosphoshikimate</name>
        <dbReference type="ChEBI" id="CHEBI:145989"/>
    </ligand>
</feature>
<feature type="binding site" evidence="1">
    <location>
        <position position="175"/>
    </location>
    <ligand>
        <name>phosphoenolpyruvate</name>
        <dbReference type="ChEBI" id="CHEBI:58702"/>
    </ligand>
</feature>
<feature type="binding site" evidence="1">
    <location>
        <position position="201"/>
    </location>
    <ligand>
        <name>3-phosphoshikimate</name>
        <dbReference type="ChEBI" id="CHEBI:145989"/>
    </ligand>
</feature>
<feature type="binding site" evidence="1">
    <location>
        <position position="316"/>
    </location>
    <ligand>
        <name>3-phosphoshikimate</name>
        <dbReference type="ChEBI" id="CHEBI:145989"/>
    </ligand>
</feature>
<feature type="binding site" evidence="1">
    <location>
        <position position="339"/>
    </location>
    <ligand>
        <name>3-phosphoshikimate</name>
        <dbReference type="ChEBI" id="CHEBI:145989"/>
    </ligand>
</feature>
<feature type="binding site" evidence="1">
    <location>
        <position position="343"/>
    </location>
    <ligand>
        <name>3-phosphoshikimate</name>
        <dbReference type="ChEBI" id="CHEBI:145989"/>
    </ligand>
</feature>
<feature type="binding site" evidence="1">
    <location>
        <position position="347"/>
    </location>
    <ligand>
        <name>phosphoenolpyruvate</name>
        <dbReference type="ChEBI" id="CHEBI:58702"/>
    </ligand>
</feature>
<feature type="binding site" evidence="1">
    <location>
        <position position="391"/>
    </location>
    <ligand>
        <name>phosphoenolpyruvate</name>
        <dbReference type="ChEBI" id="CHEBI:58702"/>
    </ligand>
</feature>
<feature type="binding site" evidence="1">
    <location>
        <position position="416"/>
    </location>
    <ligand>
        <name>phosphoenolpyruvate</name>
        <dbReference type="ChEBI" id="CHEBI:58702"/>
    </ligand>
</feature>